<dbReference type="EMBL" id="AY261360">
    <property type="status" value="NOT_ANNOTATED_CDS"/>
    <property type="molecule type" value="Genomic_DNA"/>
</dbReference>
<dbReference type="SMR" id="P0CAH0"/>
<dbReference type="Proteomes" id="UP000000861">
    <property type="component" value="Segment"/>
</dbReference>
<dbReference type="GO" id="GO:0044423">
    <property type="term" value="C:virion component"/>
    <property type="evidence" value="ECO:0007669"/>
    <property type="project" value="UniProtKB-KW"/>
</dbReference>
<comment type="subcellular location">
    <subcellularLocation>
        <location evidence="1">Virion</location>
    </subcellularLocation>
</comment>
<comment type="induction">
    <text evidence="2">Expressed in the late phase of the viral replicative cycle.</text>
</comment>
<comment type="similarity">
    <text evidence="2">Belongs to the asfivirus E423R family.</text>
</comment>
<organism>
    <name type="scientific">African swine fever virus (isolate Pig/Kenya/KEN-50/1950)</name>
    <name type="common">ASFV</name>
    <dbReference type="NCBI Taxonomy" id="561445"/>
    <lineage>
        <taxon>Viruses</taxon>
        <taxon>Varidnaviria</taxon>
        <taxon>Bamfordvirae</taxon>
        <taxon>Nucleocytoviricota</taxon>
        <taxon>Pokkesviricetes</taxon>
        <taxon>Asfuvirales</taxon>
        <taxon>Asfarviridae</taxon>
        <taxon>Asfivirus</taxon>
        <taxon>African swine fever virus</taxon>
    </lineage>
</organism>
<feature type="chain" id="PRO_0000373686" description="Uncharacterized protein E423R">
    <location>
        <begin position="1"/>
        <end position="423"/>
    </location>
</feature>
<gene>
    <name type="ordered locus">Ken-139</name>
</gene>
<sequence length="423" mass="48161">MLWRNEITEFMDQLSKYSQEILKTFKQLRPSEYKQYNEFLTQVTPLLQKTPEKIPEEVDHIFDYLDNVEKICELLVHASSIIISSKIREQVKHGMSFSYKTDLDSLAGILSQKQYVLIHLSKNIAAHYFNTCLNQGKSRLDLKAASVFYNSRPRTASSAELYRKMLYAYGSLQEINYYTEKARNKTLDVEESDSMATIERTARHNLSLMHPLEAMGLTFGATNTDADPEDLKDKTVINLTLPQATESVTYHLNSLMQLKKVSTTSGLNTNILKAFDNIISTPVKKNKMASKLAPGMDVVFTSDNGKTFFTKNVLSKNMLAGPKERVFAYNNLISNLNNSCFIQNHNDFLRQQDSWPFYDAHNFTNKFLMQPIFSGQTRPRLQGAMEAAHVETHLTAFLQSIQPSRPQDPSILASPKLSALILN</sequence>
<organismHost>
    <name type="scientific">Ornithodoros</name>
    <name type="common">relapsing fever ticks</name>
    <dbReference type="NCBI Taxonomy" id="6937"/>
</organismHost>
<organismHost>
    <name type="scientific">Phacochoerus aethiopicus</name>
    <name type="common">Warthog</name>
    <dbReference type="NCBI Taxonomy" id="85517"/>
</organismHost>
<organismHost>
    <name type="scientific">Phacochoerus africanus</name>
    <name type="common">Warthog</name>
    <dbReference type="NCBI Taxonomy" id="41426"/>
</organismHost>
<organismHost>
    <name type="scientific">Potamochoerus larvatus</name>
    <name type="common">Bushpig</name>
    <dbReference type="NCBI Taxonomy" id="273792"/>
</organismHost>
<organismHost>
    <name type="scientific">Sus scrofa</name>
    <name type="common">Pig</name>
    <dbReference type="NCBI Taxonomy" id="9823"/>
</organismHost>
<accession>P0CAH0</accession>
<reference key="1">
    <citation type="submission" date="2003-03" db="EMBL/GenBank/DDBJ databases">
        <title>African swine fever virus genomes.</title>
        <authorList>
            <person name="Kutish G.F."/>
            <person name="Rock D.L."/>
        </authorList>
    </citation>
    <scope>NUCLEOTIDE SEQUENCE [LARGE SCALE GENOMIC DNA]</scope>
</reference>
<proteinExistence type="inferred from homology"/>
<protein>
    <recommendedName>
        <fullName>Uncharacterized protein E423R</fullName>
        <shortName>pE423R</shortName>
    </recommendedName>
</protein>
<evidence type="ECO:0000250" key="1">
    <source>
        <dbReference type="UniProtKB" id="Q65195"/>
    </source>
</evidence>
<evidence type="ECO:0000305" key="2"/>
<name>VF423_ASFK5</name>
<keyword id="KW-0946">Virion</keyword>